<sequence length="36" mass="4273">YPSKPDNPGEDAPAEDMARYYSALRHYINLITRQRY</sequence>
<protein>
    <recommendedName>
        <fullName>Neuropeptide Y</fullName>
        <shortName>NPY</shortName>
    </recommendedName>
</protein>
<keyword id="KW-0027">Amidation</keyword>
<keyword id="KW-0968">Cytoplasmic vesicle</keyword>
<keyword id="KW-0903">Direct protein sequencing</keyword>
<keyword id="KW-0527">Neuropeptide</keyword>
<keyword id="KW-1185">Reference proteome</keyword>
<keyword id="KW-0964">Secreted</keyword>
<dbReference type="PIR" id="B30485">
    <property type="entry name" value="B30485"/>
</dbReference>
<dbReference type="SMR" id="P68008"/>
<dbReference type="STRING" id="10141.ENSCPOP00000018227"/>
<dbReference type="eggNOG" id="ENOG502S2BU">
    <property type="taxonomic scope" value="Eukaryota"/>
</dbReference>
<dbReference type="HOGENOM" id="CLU_162379_1_0_1"/>
<dbReference type="InParanoid" id="P68008"/>
<dbReference type="Proteomes" id="UP000005447">
    <property type="component" value="Unassembled WGS sequence"/>
</dbReference>
<dbReference type="GO" id="GO:0005615">
    <property type="term" value="C:extracellular space"/>
    <property type="evidence" value="ECO:0007669"/>
    <property type="project" value="TreeGrafter"/>
</dbReference>
<dbReference type="GO" id="GO:0098992">
    <property type="term" value="C:neuronal dense core vesicle"/>
    <property type="evidence" value="ECO:0000250"/>
    <property type="project" value="UniProtKB"/>
</dbReference>
<dbReference type="GO" id="GO:0005184">
    <property type="term" value="F:neuropeptide hormone activity"/>
    <property type="evidence" value="ECO:0007669"/>
    <property type="project" value="TreeGrafter"/>
</dbReference>
<dbReference type="GO" id="GO:0031841">
    <property type="term" value="F:neuropeptide Y receptor binding"/>
    <property type="evidence" value="ECO:0007669"/>
    <property type="project" value="TreeGrafter"/>
</dbReference>
<dbReference type="GO" id="GO:0007631">
    <property type="term" value="P:feeding behavior"/>
    <property type="evidence" value="ECO:0007669"/>
    <property type="project" value="TreeGrafter"/>
</dbReference>
<dbReference type="GO" id="GO:0007218">
    <property type="term" value="P:neuropeptide signaling pathway"/>
    <property type="evidence" value="ECO:0007669"/>
    <property type="project" value="UniProtKB-KW"/>
</dbReference>
<dbReference type="CDD" id="cd00126">
    <property type="entry name" value="PAH"/>
    <property type="match status" value="1"/>
</dbReference>
<dbReference type="Gene3D" id="6.10.250.900">
    <property type="match status" value="1"/>
</dbReference>
<dbReference type="InterPro" id="IPR001955">
    <property type="entry name" value="Pancreatic_hormone-like"/>
</dbReference>
<dbReference type="InterPro" id="IPR020392">
    <property type="entry name" value="Pancreatic_hormone-like_CS"/>
</dbReference>
<dbReference type="PANTHER" id="PTHR10533">
    <property type="entry name" value="NEUROPEPTIDE Y/PANCREATIC HORMONE/PEPTIDE YY"/>
    <property type="match status" value="1"/>
</dbReference>
<dbReference type="PANTHER" id="PTHR10533:SF5">
    <property type="entry name" value="PRO-NEUROPEPTIDE Y"/>
    <property type="match status" value="1"/>
</dbReference>
<dbReference type="Pfam" id="PF00159">
    <property type="entry name" value="Hormone_3"/>
    <property type="match status" value="1"/>
</dbReference>
<dbReference type="PRINTS" id="PR00278">
    <property type="entry name" value="PANCHORMONE"/>
</dbReference>
<dbReference type="SMART" id="SM00309">
    <property type="entry name" value="PAH"/>
    <property type="match status" value="1"/>
</dbReference>
<dbReference type="PROSITE" id="PS00265">
    <property type="entry name" value="PANCREATIC_HORMONE_1"/>
    <property type="match status" value="1"/>
</dbReference>
<dbReference type="PROSITE" id="PS50276">
    <property type="entry name" value="PANCREATIC_HORMONE_2"/>
    <property type="match status" value="1"/>
</dbReference>
<proteinExistence type="evidence at protein level"/>
<feature type="peptide" id="PRO_0000044787" description="Neuropeptide Y" evidence="3">
    <location>
        <begin position="1"/>
        <end position="36"/>
    </location>
</feature>
<feature type="modified residue" description="Tyrosine amide" evidence="3">
    <location>
        <position position="36"/>
    </location>
</feature>
<evidence type="ECO:0000250" key="1"/>
<evidence type="ECO:0000250" key="2">
    <source>
        <dbReference type="UniProtKB" id="P07808"/>
    </source>
</evidence>
<evidence type="ECO:0000269" key="3">
    <source>
    </source>
</evidence>
<evidence type="ECO:0000305" key="4"/>
<reference key="1">
    <citation type="journal article" date="1988" name="Regul. Pept.">
        <title>Neuropeptide Y in guinea pig, rabbit, rat and man. Identical amino acid sequence and oxidation of methionine-17.</title>
        <authorList>
            <person name="O'Hare M.M.T."/>
            <person name="Tenmoku S."/>
            <person name="Aakerlund L."/>
            <person name="Hilsted L."/>
            <person name="Johnsen A."/>
            <person name="Schwartz T.W."/>
        </authorList>
    </citation>
    <scope>PROTEIN SEQUENCE</scope>
    <scope>AMIDATION AT TYR-36</scope>
</reference>
<gene>
    <name type="primary">NPY</name>
</gene>
<name>NPY_CAVPO</name>
<comment type="function">
    <text evidence="1">NPY is implicated in the control of feeding and in secretion of gonadotrophin-release hormone.</text>
</comment>
<comment type="subcellular location">
    <subcellularLocation>
        <location>Secreted</location>
    </subcellularLocation>
    <subcellularLocation>
        <location evidence="2">Cytoplasmic vesicle</location>
        <location evidence="2">Secretory vesicle</location>
        <location evidence="2">Neuronal dense core vesicle</location>
    </subcellularLocation>
</comment>
<comment type="similarity">
    <text evidence="4">Belongs to the NPY family.</text>
</comment>
<organism>
    <name type="scientific">Cavia porcellus</name>
    <name type="common">Guinea pig</name>
    <dbReference type="NCBI Taxonomy" id="10141"/>
    <lineage>
        <taxon>Eukaryota</taxon>
        <taxon>Metazoa</taxon>
        <taxon>Chordata</taxon>
        <taxon>Craniata</taxon>
        <taxon>Vertebrata</taxon>
        <taxon>Euteleostomi</taxon>
        <taxon>Mammalia</taxon>
        <taxon>Eutheria</taxon>
        <taxon>Euarchontoglires</taxon>
        <taxon>Glires</taxon>
        <taxon>Rodentia</taxon>
        <taxon>Hystricomorpha</taxon>
        <taxon>Caviidae</taxon>
        <taxon>Cavia</taxon>
    </lineage>
</organism>
<accession>P68008</accession>
<accession>P09640</accession>